<sequence>MFSLPGYEYFLGFLIIAAAVPILALVTNLIVAPKGRTGERKLTYESGMEPIGGAWIQFNIRYYMFALVFVIFDVETVFLYPWAVAFNRLGLLAFIEALIFIAILVIALAYAWRKGALEWS</sequence>
<proteinExistence type="inferred from homology"/>
<feature type="chain" id="PRO_0000362726" description="NAD(P)H-quinone oxidoreductase subunit 3">
    <location>
        <begin position="1"/>
        <end position="120"/>
    </location>
</feature>
<feature type="transmembrane region" description="Helical" evidence="1">
    <location>
        <begin position="10"/>
        <end position="30"/>
    </location>
</feature>
<feature type="transmembrane region" description="Helical" evidence="1">
    <location>
        <begin position="64"/>
        <end position="84"/>
    </location>
</feature>
<feature type="transmembrane region" description="Helical" evidence="1">
    <location>
        <begin position="89"/>
        <end position="109"/>
    </location>
</feature>
<comment type="function">
    <text evidence="1">NDH-1 shuttles electrons from an unknown electron donor, via FMN and iron-sulfur (Fe-S) centers, to quinones in the respiratory and/or the photosynthetic chain. The immediate electron acceptor for the enzyme in this species is believed to be plastoquinone. Couples the redox reaction to proton translocation, and thus conserves the redox energy in a proton gradient. Cyanobacterial NDH-1 also plays a role in inorganic carbon-concentration.</text>
</comment>
<comment type="catalytic activity">
    <reaction evidence="1">
        <text>a plastoquinone + NADH + (n+1) H(+)(in) = a plastoquinol + NAD(+) + n H(+)(out)</text>
        <dbReference type="Rhea" id="RHEA:42608"/>
        <dbReference type="Rhea" id="RHEA-COMP:9561"/>
        <dbReference type="Rhea" id="RHEA-COMP:9562"/>
        <dbReference type="ChEBI" id="CHEBI:15378"/>
        <dbReference type="ChEBI" id="CHEBI:17757"/>
        <dbReference type="ChEBI" id="CHEBI:57540"/>
        <dbReference type="ChEBI" id="CHEBI:57945"/>
        <dbReference type="ChEBI" id="CHEBI:62192"/>
    </reaction>
</comment>
<comment type="catalytic activity">
    <reaction evidence="1">
        <text>a plastoquinone + NADPH + (n+1) H(+)(in) = a plastoquinol + NADP(+) + n H(+)(out)</text>
        <dbReference type="Rhea" id="RHEA:42612"/>
        <dbReference type="Rhea" id="RHEA-COMP:9561"/>
        <dbReference type="Rhea" id="RHEA-COMP:9562"/>
        <dbReference type="ChEBI" id="CHEBI:15378"/>
        <dbReference type="ChEBI" id="CHEBI:17757"/>
        <dbReference type="ChEBI" id="CHEBI:57783"/>
        <dbReference type="ChEBI" id="CHEBI:58349"/>
        <dbReference type="ChEBI" id="CHEBI:62192"/>
    </reaction>
</comment>
<comment type="subunit">
    <text evidence="1">NDH-1 can be composed of about 15 different subunits; different subcomplexes with different compositions have been identified which probably have different functions.</text>
</comment>
<comment type="subcellular location">
    <subcellularLocation>
        <location evidence="1">Cellular thylakoid membrane</location>
        <topology evidence="1">Multi-pass membrane protein</topology>
    </subcellularLocation>
</comment>
<comment type="similarity">
    <text evidence="1">Belongs to the complex I subunit 3 family.</text>
</comment>
<dbReference type="EC" id="7.1.1.-" evidence="1"/>
<dbReference type="EMBL" id="CP000552">
    <property type="protein sequence ID" value="ABM71536.1"/>
    <property type="molecule type" value="Genomic_DNA"/>
</dbReference>
<dbReference type="RefSeq" id="WP_011819645.1">
    <property type="nucleotide sequence ID" value="NC_008817.1"/>
</dbReference>
<dbReference type="SMR" id="A2BUS5"/>
<dbReference type="STRING" id="167542.P9515_03271"/>
<dbReference type="GeneID" id="60202043"/>
<dbReference type="KEGG" id="pmc:P9515_03271"/>
<dbReference type="eggNOG" id="COG0838">
    <property type="taxonomic scope" value="Bacteria"/>
</dbReference>
<dbReference type="HOGENOM" id="CLU_119549_1_1_3"/>
<dbReference type="OrthoDB" id="9791970at2"/>
<dbReference type="Proteomes" id="UP000001589">
    <property type="component" value="Chromosome"/>
</dbReference>
<dbReference type="GO" id="GO:0030964">
    <property type="term" value="C:NADH dehydrogenase complex"/>
    <property type="evidence" value="ECO:0007669"/>
    <property type="project" value="TreeGrafter"/>
</dbReference>
<dbReference type="GO" id="GO:0031676">
    <property type="term" value="C:plasma membrane-derived thylakoid membrane"/>
    <property type="evidence" value="ECO:0007669"/>
    <property type="project" value="UniProtKB-SubCell"/>
</dbReference>
<dbReference type="GO" id="GO:0008137">
    <property type="term" value="F:NADH dehydrogenase (ubiquinone) activity"/>
    <property type="evidence" value="ECO:0007669"/>
    <property type="project" value="InterPro"/>
</dbReference>
<dbReference type="GO" id="GO:0048038">
    <property type="term" value="F:quinone binding"/>
    <property type="evidence" value="ECO:0007669"/>
    <property type="project" value="UniProtKB-KW"/>
</dbReference>
<dbReference type="GO" id="GO:0019684">
    <property type="term" value="P:photosynthesis, light reaction"/>
    <property type="evidence" value="ECO:0007669"/>
    <property type="project" value="UniProtKB-UniRule"/>
</dbReference>
<dbReference type="Gene3D" id="1.20.58.1610">
    <property type="entry name" value="NADH:ubiquinone/plastoquinone oxidoreductase, chain 3"/>
    <property type="match status" value="1"/>
</dbReference>
<dbReference type="HAMAP" id="MF_01394">
    <property type="entry name" value="NDH1_NuoA"/>
    <property type="match status" value="1"/>
</dbReference>
<dbReference type="InterPro" id="IPR023043">
    <property type="entry name" value="NAD(P)H_OxRDtase_bac/plastid"/>
</dbReference>
<dbReference type="InterPro" id="IPR000440">
    <property type="entry name" value="NADH_UbQ/plastoQ_OxRdtase_su3"/>
</dbReference>
<dbReference type="InterPro" id="IPR038430">
    <property type="entry name" value="NDAH_ubi_oxred_su3_sf"/>
</dbReference>
<dbReference type="PANTHER" id="PTHR11058">
    <property type="entry name" value="NADH-UBIQUINONE OXIDOREDUCTASE CHAIN 3"/>
    <property type="match status" value="1"/>
</dbReference>
<dbReference type="PANTHER" id="PTHR11058:SF9">
    <property type="entry name" value="NADH-UBIQUINONE OXIDOREDUCTASE CHAIN 3"/>
    <property type="match status" value="1"/>
</dbReference>
<dbReference type="Pfam" id="PF00507">
    <property type="entry name" value="Oxidored_q4"/>
    <property type="match status" value="1"/>
</dbReference>
<reference key="1">
    <citation type="journal article" date="2007" name="PLoS Genet.">
        <title>Patterns and implications of gene gain and loss in the evolution of Prochlorococcus.</title>
        <authorList>
            <person name="Kettler G.C."/>
            <person name="Martiny A.C."/>
            <person name="Huang K."/>
            <person name="Zucker J."/>
            <person name="Coleman M.L."/>
            <person name="Rodrigue S."/>
            <person name="Chen F."/>
            <person name="Lapidus A."/>
            <person name="Ferriera S."/>
            <person name="Johnson J."/>
            <person name="Steglich C."/>
            <person name="Church G.M."/>
            <person name="Richardson P."/>
            <person name="Chisholm S.W."/>
        </authorList>
    </citation>
    <scope>NUCLEOTIDE SEQUENCE [LARGE SCALE GENOMIC DNA]</scope>
    <source>
        <strain>MIT 9515</strain>
    </source>
</reference>
<accession>A2BUS5</accession>
<name>NU3C_PROM5</name>
<evidence type="ECO:0000255" key="1">
    <source>
        <dbReference type="HAMAP-Rule" id="MF_01394"/>
    </source>
</evidence>
<protein>
    <recommendedName>
        <fullName evidence="1">NAD(P)H-quinone oxidoreductase subunit 3</fullName>
        <ecNumber evidence="1">7.1.1.-</ecNumber>
    </recommendedName>
    <alternativeName>
        <fullName evidence="1">NAD(P)H dehydrogenase subunit 3</fullName>
    </alternativeName>
    <alternativeName>
        <fullName evidence="1">NADH-plastoquinone oxidoreductase subunit 3</fullName>
    </alternativeName>
    <alternativeName>
        <fullName evidence="1">NDH-1 subunit 3</fullName>
        <shortName evidence="1">NDH-C</shortName>
    </alternativeName>
</protein>
<organism>
    <name type="scientific">Prochlorococcus marinus (strain MIT 9515)</name>
    <dbReference type="NCBI Taxonomy" id="167542"/>
    <lineage>
        <taxon>Bacteria</taxon>
        <taxon>Bacillati</taxon>
        <taxon>Cyanobacteriota</taxon>
        <taxon>Cyanophyceae</taxon>
        <taxon>Synechococcales</taxon>
        <taxon>Prochlorococcaceae</taxon>
        <taxon>Prochlorococcus</taxon>
    </lineage>
</organism>
<gene>
    <name evidence="1" type="primary">ndhC</name>
    <name type="ordered locus">P9515_03271</name>
</gene>
<keyword id="KW-0472">Membrane</keyword>
<keyword id="KW-0520">NAD</keyword>
<keyword id="KW-0521">NADP</keyword>
<keyword id="KW-0618">Plastoquinone</keyword>
<keyword id="KW-0874">Quinone</keyword>
<keyword id="KW-0793">Thylakoid</keyword>
<keyword id="KW-1278">Translocase</keyword>
<keyword id="KW-0812">Transmembrane</keyword>
<keyword id="KW-1133">Transmembrane helix</keyword>
<keyword id="KW-0813">Transport</keyword>